<evidence type="ECO:0000255" key="1">
    <source>
        <dbReference type="HAMAP-Rule" id="MF_01628"/>
    </source>
</evidence>
<keyword id="KW-0328">Glycosyltransferase</keyword>
<keyword id="KW-0808">Transferase</keyword>
<organism>
    <name type="scientific">Salmonella typhi</name>
    <dbReference type="NCBI Taxonomy" id="90370"/>
    <lineage>
        <taxon>Bacteria</taxon>
        <taxon>Pseudomonadati</taxon>
        <taxon>Pseudomonadota</taxon>
        <taxon>Gammaproteobacteria</taxon>
        <taxon>Enterobacterales</taxon>
        <taxon>Enterobacteriaceae</taxon>
        <taxon>Salmonella</taxon>
    </lineage>
</organism>
<accession>Q8XF46</accession>
<accession>Q7ALM5</accession>
<reference key="1">
    <citation type="journal article" date="2003" name="J. Bacteriol.">
        <title>Comparative genomics of Salmonella enterica serovar Typhi strains Ty2 and CT18.</title>
        <authorList>
            <person name="Deng W."/>
            <person name="Liou S.-R."/>
            <person name="Plunkett G. III"/>
            <person name="Mayhew G.F."/>
            <person name="Rose D.J."/>
            <person name="Burland V."/>
            <person name="Kodoyianni V."/>
            <person name="Schwartz D.C."/>
            <person name="Blattner F.R."/>
        </authorList>
    </citation>
    <scope>NUCLEOTIDE SEQUENCE [LARGE SCALE GENOMIC DNA]</scope>
    <source>
        <strain>ATCC 700931 / Ty2</strain>
    </source>
</reference>
<reference key="2">
    <citation type="journal article" date="2001" name="Nature">
        <title>Complete genome sequence of a multiple drug resistant Salmonella enterica serovar Typhi CT18.</title>
        <authorList>
            <person name="Parkhill J."/>
            <person name="Dougan G."/>
            <person name="James K.D."/>
            <person name="Thomson N.R."/>
            <person name="Pickard D."/>
            <person name="Wain J."/>
            <person name="Churcher C.M."/>
            <person name="Mungall K.L."/>
            <person name="Bentley S.D."/>
            <person name="Holden M.T.G."/>
            <person name="Sebaihia M."/>
            <person name="Baker S."/>
            <person name="Basham D."/>
            <person name="Brooks K."/>
            <person name="Chillingworth T."/>
            <person name="Connerton P."/>
            <person name="Cronin A."/>
            <person name="Davis P."/>
            <person name="Davies R.M."/>
            <person name="Dowd L."/>
            <person name="White N."/>
            <person name="Farrar J."/>
            <person name="Feltwell T."/>
            <person name="Hamlin N."/>
            <person name="Haque A."/>
            <person name="Hien T.T."/>
            <person name="Holroyd S."/>
            <person name="Jagels K."/>
            <person name="Krogh A."/>
            <person name="Larsen T.S."/>
            <person name="Leather S."/>
            <person name="Moule S."/>
            <person name="O'Gaora P."/>
            <person name="Parry C."/>
            <person name="Quail M.A."/>
            <person name="Rutherford K.M."/>
            <person name="Simmonds M."/>
            <person name="Skelton J."/>
            <person name="Stevens K."/>
            <person name="Whitehead S."/>
            <person name="Barrell B.G."/>
        </authorList>
    </citation>
    <scope>NUCLEOTIDE SEQUENCE [LARGE SCALE GENOMIC DNA]</scope>
    <source>
        <strain>CT18</strain>
    </source>
</reference>
<proteinExistence type="inferred from homology"/>
<feature type="chain" id="PRO_0000059063" description="Thymidine phosphorylase">
    <location>
        <begin position="1"/>
        <end position="440"/>
    </location>
</feature>
<sequence>MFLAQEIIRKKRDGHALSDEEIRFFINGIRDNTISEGQIAALAMTIFFHDMTMPERVSLTMAMRDSGTVLDWKSLNLNGPIVDKHSTGGVGDVTSLMLGPMVAACGGYVPMISGRGLGHTGGTLDKLEAIPGFDIFPDDNRFREIIQDVGVAIIGQTSSLAPADKRFYATRDITATVDSIPLITGSILAKKLAEGLDALVMDVKVGSGAFMPTYELSEALAEAIVGVANGAGVRTTALLTDMNQVLASSAGNAVEVREAVQFLTGEYRNPRLFDVTMALCVEMLISGQLAKDDAEARAKLQAVLDNGKAAEVFGRMVAAQKGPSDFVENYDKYLPTAMLSKAVYADTEGFISAMDTRALGMAVVSMGGGRRQASDTIDYSVGFTDMARLGDSIDGQRPLAVIHAKDEASWQEAAKAVKAAIILDDKAPASTPSVYRRITE</sequence>
<comment type="function">
    <text evidence="1">The enzymes which catalyze the reversible phosphorolysis of pyrimidine nucleosides are involved in the degradation of these compounds and in their utilization as carbon and energy sources, or in the rescue of pyrimidine bases for nucleotide synthesis.</text>
</comment>
<comment type="catalytic activity">
    <reaction evidence="1">
        <text>thymidine + phosphate = 2-deoxy-alpha-D-ribose 1-phosphate + thymine</text>
        <dbReference type="Rhea" id="RHEA:16037"/>
        <dbReference type="ChEBI" id="CHEBI:17748"/>
        <dbReference type="ChEBI" id="CHEBI:17821"/>
        <dbReference type="ChEBI" id="CHEBI:43474"/>
        <dbReference type="ChEBI" id="CHEBI:57259"/>
        <dbReference type="EC" id="2.4.2.4"/>
    </reaction>
</comment>
<comment type="pathway">
    <text evidence="1">Pyrimidine metabolism; dTMP biosynthesis via salvage pathway; dTMP from thymine: step 1/2.</text>
</comment>
<comment type="subunit">
    <text evidence="1">Homodimer.</text>
</comment>
<comment type="similarity">
    <text evidence="1">Belongs to the thymidine/pyrimidine-nucleoside phosphorylase family.</text>
</comment>
<name>TYPH_SALTI</name>
<gene>
    <name evidence="1" type="primary">deoA</name>
    <name type="ordered locus">STY4919</name>
    <name type="ordered locus">t4611</name>
</gene>
<dbReference type="EC" id="2.4.2.4" evidence="1"/>
<dbReference type="EMBL" id="AE014613">
    <property type="protein sequence ID" value="AAO72043.1"/>
    <property type="molecule type" value="Genomic_DNA"/>
</dbReference>
<dbReference type="EMBL" id="AL513382">
    <property type="protein sequence ID" value="CAD03403.1"/>
    <property type="molecule type" value="Genomic_DNA"/>
</dbReference>
<dbReference type="RefSeq" id="NP_458980.1">
    <property type="nucleotide sequence ID" value="NC_003198.1"/>
</dbReference>
<dbReference type="RefSeq" id="WP_000477838.1">
    <property type="nucleotide sequence ID" value="NZ_WSUR01000014.1"/>
</dbReference>
<dbReference type="SMR" id="Q8XF46"/>
<dbReference type="STRING" id="220341.gene:17588737"/>
<dbReference type="KEGG" id="stt:t4611"/>
<dbReference type="KEGG" id="sty:STY4919"/>
<dbReference type="PATRIC" id="fig|220341.7.peg.5040"/>
<dbReference type="eggNOG" id="COG0213">
    <property type="taxonomic scope" value="Bacteria"/>
</dbReference>
<dbReference type="HOGENOM" id="CLU_025040_0_1_6"/>
<dbReference type="OMA" id="VWGGATN"/>
<dbReference type="OrthoDB" id="9763887at2"/>
<dbReference type="UniPathway" id="UPA00578">
    <property type="reaction ID" value="UER00638"/>
</dbReference>
<dbReference type="Proteomes" id="UP000000541">
    <property type="component" value="Chromosome"/>
</dbReference>
<dbReference type="Proteomes" id="UP000002670">
    <property type="component" value="Chromosome"/>
</dbReference>
<dbReference type="GO" id="GO:0005829">
    <property type="term" value="C:cytosol"/>
    <property type="evidence" value="ECO:0007669"/>
    <property type="project" value="TreeGrafter"/>
</dbReference>
<dbReference type="GO" id="GO:0004645">
    <property type="term" value="F:1,4-alpha-oligoglucan phosphorylase activity"/>
    <property type="evidence" value="ECO:0007669"/>
    <property type="project" value="InterPro"/>
</dbReference>
<dbReference type="GO" id="GO:0009032">
    <property type="term" value="F:thymidine phosphorylase activity"/>
    <property type="evidence" value="ECO:0007669"/>
    <property type="project" value="UniProtKB-UniRule"/>
</dbReference>
<dbReference type="GO" id="GO:0006206">
    <property type="term" value="P:pyrimidine nucleobase metabolic process"/>
    <property type="evidence" value="ECO:0007669"/>
    <property type="project" value="InterPro"/>
</dbReference>
<dbReference type="GO" id="GO:0046104">
    <property type="term" value="P:thymidine metabolic process"/>
    <property type="evidence" value="ECO:0007669"/>
    <property type="project" value="UniProtKB-UniRule"/>
</dbReference>
<dbReference type="FunFam" id="3.40.1030.10:FF:000001">
    <property type="entry name" value="Thymidine phosphorylase"/>
    <property type="match status" value="1"/>
</dbReference>
<dbReference type="FunFam" id="3.90.1170.30:FF:000001">
    <property type="entry name" value="Thymidine phosphorylase"/>
    <property type="match status" value="1"/>
</dbReference>
<dbReference type="Gene3D" id="3.40.1030.10">
    <property type="entry name" value="Nucleoside phosphorylase/phosphoribosyltransferase catalytic domain"/>
    <property type="match status" value="1"/>
</dbReference>
<dbReference type="Gene3D" id="3.90.1170.30">
    <property type="entry name" value="Pyrimidine nucleoside phosphorylase-like, C-terminal domain"/>
    <property type="match status" value="1"/>
</dbReference>
<dbReference type="Gene3D" id="1.20.970.10">
    <property type="entry name" value="Transferase, Pyrimidine Nucleoside Phosphorylase, Chain C"/>
    <property type="match status" value="1"/>
</dbReference>
<dbReference type="HAMAP" id="MF_01628">
    <property type="entry name" value="Thymid_phosp"/>
    <property type="match status" value="1"/>
</dbReference>
<dbReference type="InterPro" id="IPR000312">
    <property type="entry name" value="Glycosyl_Trfase_fam3"/>
</dbReference>
<dbReference type="InterPro" id="IPR017459">
    <property type="entry name" value="Glycosyl_Trfase_fam3_N_dom"/>
</dbReference>
<dbReference type="InterPro" id="IPR036320">
    <property type="entry name" value="Glycosyl_Trfase_fam3_N_dom_sf"/>
</dbReference>
<dbReference type="InterPro" id="IPR035902">
    <property type="entry name" value="Nuc_phospho_transferase"/>
</dbReference>
<dbReference type="InterPro" id="IPR036566">
    <property type="entry name" value="PYNP-like_C_sf"/>
</dbReference>
<dbReference type="InterPro" id="IPR013102">
    <property type="entry name" value="PYNP_C"/>
</dbReference>
<dbReference type="InterPro" id="IPR018090">
    <property type="entry name" value="Pyrmidine_PPas_bac/euk"/>
</dbReference>
<dbReference type="InterPro" id="IPR017872">
    <property type="entry name" value="Pyrmidine_PPase_CS"/>
</dbReference>
<dbReference type="InterPro" id="IPR000053">
    <property type="entry name" value="Thymidine/pyrmidine_PPase"/>
</dbReference>
<dbReference type="InterPro" id="IPR013465">
    <property type="entry name" value="Thymidine_Pase"/>
</dbReference>
<dbReference type="NCBIfam" id="NF004490">
    <property type="entry name" value="PRK05820.1"/>
    <property type="match status" value="1"/>
</dbReference>
<dbReference type="NCBIfam" id="TIGR02643">
    <property type="entry name" value="T_phosphoryl"/>
    <property type="match status" value="1"/>
</dbReference>
<dbReference type="NCBIfam" id="TIGR02644">
    <property type="entry name" value="Y_phosphoryl"/>
    <property type="match status" value="1"/>
</dbReference>
<dbReference type="PANTHER" id="PTHR10515">
    <property type="entry name" value="THYMIDINE PHOSPHORYLASE"/>
    <property type="match status" value="1"/>
</dbReference>
<dbReference type="PANTHER" id="PTHR10515:SF0">
    <property type="entry name" value="THYMIDINE PHOSPHORYLASE"/>
    <property type="match status" value="1"/>
</dbReference>
<dbReference type="Pfam" id="PF02885">
    <property type="entry name" value="Glycos_trans_3N"/>
    <property type="match status" value="1"/>
</dbReference>
<dbReference type="Pfam" id="PF00591">
    <property type="entry name" value="Glycos_transf_3"/>
    <property type="match status" value="1"/>
</dbReference>
<dbReference type="Pfam" id="PF07831">
    <property type="entry name" value="PYNP_C"/>
    <property type="match status" value="1"/>
</dbReference>
<dbReference type="PIRSF" id="PIRSF000478">
    <property type="entry name" value="TP_PyNP"/>
    <property type="match status" value="1"/>
</dbReference>
<dbReference type="SMART" id="SM00941">
    <property type="entry name" value="PYNP_C"/>
    <property type="match status" value="1"/>
</dbReference>
<dbReference type="SUPFAM" id="SSF52418">
    <property type="entry name" value="Nucleoside phosphorylase/phosphoribosyltransferase catalytic domain"/>
    <property type="match status" value="1"/>
</dbReference>
<dbReference type="SUPFAM" id="SSF47648">
    <property type="entry name" value="Nucleoside phosphorylase/phosphoribosyltransferase N-terminal domain"/>
    <property type="match status" value="1"/>
</dbReference>
<dbReference type="SUPFAM" id="SSF54680">
    <property type="entry name" value="Pyrimidine nucleoside phosphorylase C-terminal domain"/>
    <property type="match status" value="1"/>
</dbReference>
<dbReference type="PROSITE" id="PS00647">
    <property type="entry name" value="THYMID_PHOSPHORYLASE"/>
    <property type="match status" value="1"/>
</dbReference>
<protein>
    <recommendedName>
        <fullName evidence="1">Thymidine phosphorylase</fullName>
        <ecNumber evidence="1">2.4.2.4</ecNumber>
    </recommendedName>
    <alternativeName>
        <fullName evidence="1">TdRPase</fullName>
    </alternativeName>
</protein>